<sequence length="155" mass="17400">MSKKGGYKGVQVDHRYNDESVARFINAVMLDGKKDVATKIVYDAFAIIGEKMVDENPLEVYRRAMSNIAPVVEVRSKRVGGATYQIPMEVKPSRRGALAFRWLKQYATKRGGRSMAEKLAAELMDAASEQGASVKKRDEVHRMADANKAFAHFRF</sequence>
<feature type="chain" id="PRO_0000241766" description="Small ribosomal subunit protein uS7">
    <location>
        <begin position="1"/>
        <end position="155"/>
    </location>
</feature>
<gene>
    <name evidence="1" type="primary">rpsG</name>
    <name type="ordered locus">Plut_0176</name>
</gene>
<proteinExistence type="inferred from homology"/>
<evidence type="ECO:0000255" key="1">
    <source>
        <dbReference type="HAMAP-Rule" id="MF_00480"/>
    </source>
</evidence>
<evidence type="ECO:0000305" key="2"/>
<comment type="function">
    <text evidence="1">One of the primary rRNA binding proteins, it binds directly to 16S rRNA where it nucleates assembly of the head domain of the 30S subunit. Is located at the subunit interface close to the decoding center, probably blocks exit of the E-site tRNA.</text>
</comment>
<comment type="subunit">
    <text evidence="1">Part of the 30S ribosomal subunit. Contacts proteins S9 and S11.</text>
</comment>
<comment type="similarity">
    <text evidence="1">Belongs to the universal ribosomal protein uS7 family.</text>
</comment>
<protein>
    <recommendedName>
        <fullName evidence="1">Small ribosomal subunit protein uS7</fullName>
    </recommendedName>
    <alternativeName>
        <fullName evidence="2">30S ribosomal protein S7</fullName>
    </alternativeName>
</protein>
<dbReference type="EMBL" id="CP000096">
    <property type="protein sequence ID" value="ABB23066.1"/>
    <property type="molecule type" value="Genomic_DNA"/>
</dbReference>
<dbReference type="RefSeq" id="WP_011356942.1">
    <property type="nucleotide sequence ID" value="NC_007512.1"/>
</dbReference>
<dbReference type="SMR" id="Q3B6G5"/>
<dbReference type="STRING" id="319225.Plut_0176"/>
<dbReference type="KEGG" id="plt:Plut_0176"/>
<dbReference type="eggNOG" id="COG0049">
    <property type="taxonomic scope" value="Bacteria"/>
</dbReference>
<dbReference type="HOGENOM" id="CLU_072226_1_1_10"/>
<dbReference type="OrthoDB" id="9807653at2"/>
<dbReference type="Proteomes" id="UP000002709">
    <property type="component" value="Chromosome"/>
</dbReference>
<dbReference type="GO" id="GO:0015935">
    <property type="term" value="C:small ribosomal subunit"/>
    <property type="evidence" value="ECO:0007669"/>
    <property type="project" value="InterPro"/>
</dbReference>
<dbReference type="GO" id="GO:0019843">
    <property type="term" value="F:rRNA binding"/>
    <property type="evidence" value="ECO:0007669"/>
    <property type="project" value="UniProtKB-UniRule"/>
</dbReference>
<dbReference type="GO" id="GO:0003735">
    <property type="term" value="F:structural constituent of ribosome"/>
    <property type="evidence" value="ECO:0007669"/>
    <property type="project" value="InterPro"/>
</dbReference>
<dbReference type="GO" id="GO:0000049">
    <property type="term" value="F:tRNA binding"/>
    <property type="evidence" value="ECO:0007669"/>
    <property type="project" value="UniProtKB-UniRule"/>
</dbReference>
<dbReference type="GO" id="GO:0006412">
    <property type="term" value="P:translation"/>
    <property type="evidence" value="ECO:0007669"/>
    <property type="project" value="UniProtKB-UniRule"/>
</dbReference>
<dbReference type="CDD" id="cd14869">
    <property type="entry name" value="uS7_Bacteria"/>
    <property type="match status" value="1"/>
</dbReference>
<dbReference type="FunFam" id="1.10.455.10:FF:000001">
    <property type="entry name" value="30S ribosomal protein S7"/>
    <property type="match status" value="1"/>
</dbReference>
<dbReference type="Gene3D" id="1.10.455.10">
    <property type="entry name" value="Ribosomal protein S7 domain"/>
    <property type="match status" value="1"/>
</dbReference>
<dbReference type="HAMAP" id="MF_00480_B">
    <property type="entry name" value="Ribosomal_uS7_B"/>
    <property type="match status" value="1"/>
</dbReference>
<dbReference type="InterPro" id="IPR000235">
    <property type="entry name" value="Ribosomal_uS7"/>
</dbReference>
<dbReference type="InterPro" id="IPR005717">
    <property type="entry name" value="Ribosomal_uS7_bac/org-type"/>
</dbReference>
<dbReference type="InterPro" id="IPR023798">
    <property type="entry name" value="Ribosomal_uS7_dom"/>
</dbReference>
<dbReference type="InterPro" id="IPR036823">
    <property type="entry name" value="Ribosomal_uS7_dom_sf"/>
</dbReference>
<dbReference type="NCBIfam" id="TIGR01029">
    <property type="entry name" value="rpsG_bact"/>
    <property type="match status" value="1"/>
</dbReference>
<dbReference type="PANTHER" id="PTHR11205">
    <property type="entry name" value="RIBOSOMAL PROTEIN S7"/>
    <property type="match status" value="1"/>
</dbReference>
<dbReference type="Pfam" id="PF00177">
    <property type="entry name" value="Ribosomal_S7"/>
    <property type="match status" value="1"/>
</dbReference>
<dbReference type="PIRSF" id="PIRSF002122">
    <property type="entry name" value="RPS7p_RPS7a_RPS5e_RPS7o"/>
    <property type="match status" value="1"/>
</dbReference>
<dbReference type="SUPFAM" id="SSF47973">
    <property type="entry name" value="Ribosomal protein S7"/>
    <property type="match status" value="1"/>
</dbReference>
<name>RS7_CHLL3</name>
<accession>Q3B6G5</accession>
<organism>
    <name type="scientific">Chlorobium luteolum (strain DSM 273 / BCRC 81028 / 2530)</name>
    <name type="common">Pelodictyon luteolum</name>
    <dbReference type="NCBI Taxonomy" id="319225"/>
    <lineage>
        <taxon>Bacteria</taxon>
        <taxon>Pseudomonadati</taxon>
        <taxon>Chlorobiota</taxon>
        <taxon>Chlorobiia</taxon>
        <taxon>Chlorobiales</taxon>
        <taxon>Chlorobiaceae</taxon>
        <taxon>Chlorobium/Pelodictyon group</taxon>
        <taxon>Pelodictyon</taxon>
    </lineage>
</organism>
<keyword id="KW-1185">Reference proteome</keyword>
<keyword id="KW-0687">Ribonucleoprotein</keyword>
<keyword id="KW-0689">Ribosomal protein</keyword>
<keyword id="KW-0694">RNA-binding</keyword>
<keyword id="KW-0699">rRNA-binding</keyword>
<keyword id="KW-0820">tRNA-binding</keyword>
<reference key="1">
    <citation type="submission" date="2005-08" db="EMBL/GenBank/DDBJ databases">
        <title>Complete sequence of Pelodictyon luteolum DSM 273.</title>
        <authorList>
            <consortium name="US DOE Joint Genome Institute"/>
            <person name="Copeland A."/>
            <person name="Lucas S."/>
            <person name="Lapidus A."/>
            <person name="Barry K."/>
            <person name="Detter J.C."/>
            <person name="Glavina T."/>
            <person name="Hammon N."/>
            <person name="Israni S."/>
            <person name="Pitluck S."/>
            <person name="Bryant D."/>
            <person name="Schmutz J."/>
            <person name="Larimer F."/>
            <person name="Land M."/>
            <person name="Kyrpides N."/>
            <person name="Ivanova N."/>
            <person name="Richardson P."/>
        </authorList>
    </citation>
    <scope>NUCLEOTIDE SEQUENCE [LARGE SCALE GENOMIC DNA]</scope>
    <source>
        <strain>DSM 273 / BCRC 81028 / 2530</strain>
    </source>
</reference>